<sequence>MFASYKSIQETCAFEKLSELAQSPYDLTQPGALQADNRLQRYQVAGQAFKLFYATEQVDDRVLAGLQAVADECQLVSQYRAMRTGAVMNKIDGFVSENRRVLHTATRDLFSGEPAEASMNSRAKRELEKLSHFLDALDAGEIVNEAGEAFTTIVQVGIGGSDLGPRAVYEALKSYTIVGRRAAFISNVDPDDVSMALADLDLGKTIFNIVSKSGSTLETVTNEAFVRRALLENGYDSARHCISITGEGSPMDDPDSYLASFYLYDCIGGRYSTTSMVGCVLLGFTLGFEQVMAFLRGAANMDNSADEVDILKNIPLLMALIGIWNRNFLDLSSLAIIPYSQALYRFPAHLQQCDMESNGKSVDRQGRAVQGKTGPIIWGETGSNSQHAFFQHIYQGTSPVPIEFIGFSESQRGKDIEVQGCTSQQKLLANLFAQMVALACGKKDQNLNKFFAGNRPSCLLFAKKLTPYVMGSLLACYEAKIVFQGFAWNINSFDQEGVQLGKELAKRFLREIGGEEEGFHGIESAFLNEVQRGV</sequence>
<proteinExistence type="inferred from homology"/>
<reference key="1">
    <citation type="journal article" date="2004" name="Environ. Microbiol.">
        <title>The genome of Desulfotalea psychrophila, a sulfate-reducing bacterium from permanently cold Arctic sediments.</title>
        <authorList>
            <person name="Rabus R."/>
            <person name="Ruepp A."/>
            <person name="Frickey T."/>
            <person name="Rattei T."/>
            <person name="Fartmann B."/>
            <person name="Stark M."/>
            <person name="Bauer M."/>
            <person name="Zibat A."/>
            <person name="Lombardot T."/>
            <person name="Becker I."/>
            <person name="Amann J."/>
            <person name="Gellner K."/>
            <person name="Teeling H."/>
            <person name="Leuschner W.D."/>
            <person name="Gloeckner F.-O."/>
            <person name="Lupas A.N."/>
            <person name="Amann R."/>
            <person name="Klenk H.-P."/>
        </authorList>
    </citation>
    <scope>NUCLEOTIDE SEQUENCE [LARGE SCALE GENOMIC DNA]</scope>
    <source>
        <strain>DSM 12343 / LSv54</strain>
    </source>
</reference>
<gene>
    <name evidence="1" type="primary">pgi</name>
    <name type="ordered locus">DP0796</name>
</gene>
<evidence type="ECO:0000255" key="1">
    <source>
        <dbReference type="HAMAP-Rule" id="MF_00473"/>
    </source>
</evidence>
<evidence type="ECO:0000305" key="2"/>
<organism>
    <name type="scientific">Desulfotalea psychrophila (strain LSv54 / DSM 12343)</name>
    <dbReference type="NCBI Taxonomy" id="177439"/>
    <lineage>
        <taxon>Bacteria</taxon>
        <taxon>Pseudomonadati</taxon>
        <taxon>Thermodesulfobacteriota</taxon>
        <taxon>Desulfobulbia</taxon>
        <taxon>Desulfobulbales</taxon>
        <taxon>Desulfocapsaceae</taxon>
        <taxon>Desulfotalea</taxon>
    </lineage>
</organism>
<feature type="chain" id="PRO_0000180638" description="Glucose-6-phosphate isomerase">
    <location>
        <begin position="1"/>
        <end position="534"/>
    </location>
</feature>
<feature type="active site" description="Proton donor" evidence="1">
    <location>
        <position position="356"/>
    </location>
</feature>
<feature type="active site" evidence="1">
    <location>
        <position position="387"/>
    </location>
</feature>
<feature type="active site" evidence="1">
    <location>
        <position position="502"/>
    </location>
</feature>
<dbReference type="EC" id="5.3.1.9" evidence="1"/>
<dbReference type="EMBL" id="CR522870">
    <property type="protein sequence ID" value="CAG35525.1"/>
    <property type="status" value="ALT_INIT"/>
    <property type="molecule type" value="Genomic_DNA"/>
</dbReference>
<dbReference type="RefSeq" id="WP_041277607.1">
    <property type="nucleotide sequence ID" value="NC_006138.1"/>
</dbReference>
<dbReference type="SMR" id="Q6AQ48"/>
<dbReference type="STRING" id="177439.DP0796"/>
<dbReference type="KEGG" id="dps:DP0796"/>
<dbReference type="eggNOG" id="COG0166">
    <property type="taxonomic scope" value="Bacteria"/>
</dbReference>
<dbReference type="HOGENOM" id="CLU_017947_3_1_7"/>
<dbReference type="OrthoDB" id="140919at2"/>
<dbReference type="UniPathway" id="UPA00109">
    <property type="reaction ID" value="UER00181"/>
</dbReference>
<dbReference type="UniPathway" id="UPA00138"/>
<dbReference type="Proteomes" id="UP000000602">
    <property type="component" value="Chromosome"/>
</dbReference>
<dbReference type="GO" id="GO:0005829">
    <property type="term" value="C:cytosol"/>
    <property type="evidence" value="ECO:0007669"/>
    <property type="project" value="TreeGrafter"/>
</dbReference>
<dbReference type="GO" id="GO:0097367">
    <property type="term" value="F:carbohydrate derivative binding"/>
    <property type="evidence" value="ECO:0007669"/>
    <property type="project" value="InterPro"/>
</dbReference>
<dbReference type="GO" id="GO:0004347">
    <property type="term" value="F:glucose-6-phosphate isomerase activity"/>
    <property type="evidence" value="ECO:0007669"/>
    <property type="project" value="UniProtKB-UniRule"/>
</dbReference>
<dbReference type="GO" id="GO:0048029">
    <property type="term" value="F:monosaccharide binding"/>
    <property type="evidence" value="ECO:0007669"/>
    <property type="project" value="TreeGrafter"/>
</dbReference>
<dbReference type="GO" id="GO:0006094">
    <property type="term" value="P:gluconeogenesis"/>
    <property type="evidence" value="ECO:0007669"/>
    <property type="project" value="UniProtKB-UniRule"/>
</dbReference>
<dbReference type="GO" id="GO:0051156">
    <property type="term" value="P:glucose 6-phosphate metabolic process"/>
    <property type="evidence" value="ECO:0007669"/>
    <property type="project" value="TreeGrafter"/>
</dbReference>
<dbReference type="GO" id="GO:0006096">
    <property type="term" value="P:glycolytic process"/>
    <property type="evidence" value="ECO:0007669"/>
    <property type="project" value="UniProtKB-UniRule"/>
</dbReference>
<dbReference type="CDD" id="cd05015">
    <property type="entry name" value="SIS_PGI_1"/>
    <property type="match status" value="1"/>
</dbReference>
<dbReference type="CDD" id="cd05016">
    <property type="entry name" value="SIS_PGI_2"/>
    <property type="match status" value="1"/>
</dbReference>
<dbReference type="Gene3D" id="1.10.1390.10">
    <property type="match status" value="1"/>
</dbReference>
<dbReference type="Gene3D" id="3.40.50.10490">
    <property type="entry name" value="Glucose-6-phosphate isomerase like protein, domain 1"/>
    <property type="match status" value="2"/>
</dbReference>
<dbReference type="HAMAP" id="MF_00473">
    <property type="entry name" value="G6P_isomerase"/>
    <property type="match status" value="1"/>
</dbReference>
<dbReference type="InterPro" id="IPR001672">
    <property type="entry name" value="G6P_Isomerase"/>
</dbReference>
<dbReference type="InterPro" id="IPR023096">
    <property type="entry name" value="G6P_Isomerase_C"/>
</dbReference>
<dbReference type="InterPro" id="IPR018189">
    <property type="entry name" value="Phosphoglucose_isomerase_CS"/>
</dbReference>
<dbReference type="InterPro" id="IPR046348">
    <property type="entry name" value="SIS_dom_sf"/>
</dbReference>
<dbReference type="InterPro" id="IPR035476">
    <property type="entry name" value="SIS_PGI_1"/>
</dbReference>
<dbReference type="InterPro" id="IPR035482">
    <property type="entry name" value="SIS_PGI_2"/>
</dbReference>
<dbReference type="NCBIfam" id="NF010695">
    <property type="entry name" value="PRK14095.1"/>
    <property type="match status" value="1"/>
</dbReference>
<dbReference type="PANTHER" id="PTHR11469">
    <property type="entry name" value="GLUCOSE-6-PHOSPHATE ISOMERASE"/>
    <property type="match status" value="1"/>
</dbReference>
<dbReference type="PANTHER" id="PTHR11469:SF1">
    <property type="entry name" value="GLUCOSE-6-PHOSPHATE ISOMERASE"/>
    <property type="match status" value="1"/>
</dbReference>
<dbReference type="Pfam" id="PF00342">
    <property type="entry name" value="PGI"/>
    <property type="match status" value="1"/>
</dbReference>
<dbReference type="PRINTS" id="PR00662">
    <property type="entry name" value="G6PISOMERASE"/>
</dbReference>
<dbReference type="SUPFAM" id="SSF53697">
    <property type="entry name" value="SIS domain"/>
    <property type="match status" value="1"/>
</dbReference>
<dbReference type="PROSITE" id="PS00765">
    <property type="entry name" value="P_GLUCOSE_ISOMERASE_1"/>
    <property type="match status" value="1"/>
</dbReference>
<dbReference type="PROSITE" id="PS00174">
    <property type="entry name" value="P_GLUCOSE_ISOMERASE_2"/>
    <property type="match status" value="1"/>
</dbReference>
<dbReference type="PROSITE" id="PS51463">
    <property type="entry name" value="P_GLUCOSE_ISOMERASE_3"/>
    <property type="match status" value="1"/>
</dbReference>
<protein>
    <recommendedName>
        <fullName evidence="1">Glucose-6-phosphate isomerase</fullName>
        <shortName evidence="1">GPI</shortName>
        <ecNumber evidence="1">5.3.1.9</ecNumber>
    </recommendedName>
    <alternativeName>
        <fullName evidence="1">Phosphoglucose isomerase</fullName>
        <shortName evidence="1">PGI</shortName>
    </alternativeName>
    <alternativeName>
        <fullName evidence="1">Phosphohexose isomerase</fullName>
        <shortName evidence="1">PHI</shortName>
    </alternativeName>
</protein>
<name>G6PI_DESPS</name>
<accession>Q6AQ48</accession>
<keyword id="KW-0963">Cytoplasm</keyword>
<keyword id="KW-0312">Gluconeogenesis</keyword>
<keyword id="KW-0324">Glycolysis</keyword>
<keyword id="KW-0413">Isomerase</keyword>
<keyword id="KW-1185">Reference proteome</keyword>
<comment type="function">
    <text evidence="1">Catalyzes the reversible isomerization of glucose-6-phosphate to fructose-6-phosphate.</text>
</comment>
<comment type="catalytic activity">
    <reaction evidence="1">
        <text>alpha-D-glucose 6-phosphate = beta-D-fructose 6-phosphate</text>
        <dbReference type="Rhea" id="RHEA:11816"/>
        <dbReference type="ChEBI" id="CHEBI:57634"/>
        <dbReference type="ChEBI" id="CHEBI:58225"/>
        <dbReference type="EC" id="5.3.1.9"/>
    </reaction>
</comment>
<comment type="pathway">
    <text evidence="1">Carbohydrate biosynthesis; gluconeogenesis.</text>
</comment>
<comment type="pathway">
    <text evidence="1">Carbohydrate degradation; glycolysis; D-glyceraldehyde 3-phosphate and glycerone phosphate from D-glucose: step 2/4.</text>
</comment>
<comment type="subcellular location">
    <subcellularLocation>
        <location evidence="1">Cytoplasm</location>
    </subcellularLocation>
</comment>
<comment type="similarity">
    <text evidence="1">Belongs to the GPI family.</text>
</comment>
<comment type="sequence caution" evidence="2">
    <conflict type="erroneous initiation">
        <sequence resource="EMBL-CDS" id="CAG35525"/>
    </conflict>
</comment>